<gene>
    <name evidence="1" type="primary">rpsO</name>
    <name type="ordered locus">SpyM3_1681</name>
</gene>
<reference key="1">
    <citation type="journal article" date="2002" name="Proc. Natl. Acad. Sci. U.S.A.">
        <title>Genome sequence of a serotype M3 strain of group A Streptococcus: phage-encoded toxins, the high-virulence phenotype, and clone emergence.</title>
        <authorList>
            <person name="Beres S.B."/>
            <person name="Sylva G.L."/>
            <person name="Barbian K.D."/>
            <person name="Lei B."/>
            <person name="Hoff J.S."/>
            <person name="Mammarella N.D."/>
            <person name="Liu M.-Y."/>
            <person name="Smoot J.C."/>
            <person name="Porcella S.F."/>
            <person name="Parkins L.D."/>
            <person name="Campbell D.S."/>
            <person name="Smith T.M."/>
            <person name="McCormick J.K."/>
            <person name="Leung D.Y.M."/>
            <person name="Schlievert P.M."/>
            <person name="Musser J.M."/>
        </authorList>
    </citation>
    <scope>NUCLEOTIDE SEQUENCE [LARGE SCALE GENOMIC DNA]</scope>
    <source>
        <strain>ATCC BAA-595 / MGAS315</strain>
    </source>
</reference>
<accession>P0DE74</accession>
<accession>Q7CEP9</accession>
<accession>Q8NZC0</accession>
<evidence type="ECO:0000255" key="1">
    <source>
        <dbReference type="HAMAP-Rule" id="MF_01343"/>
    </source>
</evidence>
<evidence type="ECO:0000305" key="2"/>
<sequence length="89" mass="10504">MAISKEKKNEIIAQYARHEGDTGSVEVQVAVLTWEINHLNSHIKEHKKDHATYRGLMKKIGHRRNLLAYLRRTDVNRYRELIQSLGLRR</sequence>
<keyword id="KW-0687">Ribonucleoprotein</keyword>
<keyword id="KW-0689">Ribosomal protein</keyword>
<keyword id="KW-0694">RNA-binding</keyword>
<keyword id="KW-0699">rRNA-binding</keyword>
<organism>
    <name type="scientific">Streptococcus pyogenes serotype M3 (strain ATCC BAA-595 / MGAS315)</name>
    <dbReference type="NCBI Taxonomy" id="198466"/>
    <lineage>
        <taxon>Bacteria</taxon>
        <taxon>Bacillati</taxon>
        <taxon>Bacillota</taxon>
        <taxon>Bacilli</taxon>
        <taxon>Lactobacillales</taxon>
        <taxon>Streptococcaceae</taxon>
        <taxon>Streptococcus</taxon>
    </lineage>
</organism>
<comment type="function">
    <text evidence="1">One of the primary rRNA binding proteins, it binds directly to 16S rRNA where it helps nucleate assembly of the platform of the 30S subunit by binding and bridging several RNA helices of the 16S rRNA.</text>
</comment>
<comment type="function">
    <text evidence="1">Forms an intersubunit bridge (bridge B4) with the 23S rRNA of the 50S subunit in the ribosome.</text>
</comment>
<comment type="subunit">
    <text evidence="1">Part of the 30S ribosomal subunit. Forms a bridge to the 50S subunit in the 70S ribosome, contacting the 23S rRNA.</text>
</comment>
<comment type="similarity">
    <text evidence="1">Belongs to the universal ribosomal protein uS15 family.</text>
</comment>
<name>RS15_STRP3</name>
<feature type="chain" id="PRO_0000115558" description="Small ribosomal subunit protein uS15">
    <location>
        <begin position="1"/>
        <end position="89"/>
    </location>
</feature>
<dbReference type="EMBL" id="AE014074">
    <property type="protein sequence ID" value="AAM80288.1"/>
    <property type="molecule type" value="Genomic_DNA"/>
</dbReference>
<dbReference type="RefSeq" id="WP_002982634.1">
    <property type="nucleotide sequence ID" value="NC_004070.1"/>
</dbReference>
<dbReference type="SMR" id="P0DE74"/>
<dbReference type="KEGG" id="spg:SpyM3_1681"/>
<dbReference type="HOGENOM" id="CLU_148518_0_0_9"/>
<dbReference type="Proteomes" id="UP000000564">
    <property type="component" value="Chromosome"/>
</dbReference>
<dbReference type="GO" id="GO:0022627">
    <property type="term" value="C:cytosolic small ribosomal subunit"/>
    <property type="evidence" value="ECO:0007669"/>
    <property type="project" value="TreeGrafter"/>
</dbReference>
<dbReference type="GO" id="GO:0019843">
    <property type="term" value="F:rRNA binding"/>
    <property type="evidence" value="ECO:0007669"/>
    <property type="project" value="UniProtKB-UniRule"/>
</dbReference>
<dbReference type="GO" id="GO:0003735">
    <property type="term" value="F:structural constituent of ribosome"/>
    <property type="evidence" value="ECO:0007669"/>
    <property type="project" value="InterPro"/>
</dbReference>
<dbReference type="GO" id="GO:0006412">
    <property type="term" value="P:translation"/>
    <property type="evidence" value="ECO:0007669"/>
    <property type="project" value="UniProtKB-UniRule"/>
</dbReference>
<dbReference type="CDD" id="cd00353">
    <property type="entry name" value="Ribosomal_S15p_S13e"/>
    <property type="match status" value="1"/>
</dbReference>
<dbReference type="FunFam" id="1.10.287.10:FF:000002">
    <property type="entry name" value="30S ribosomal protein S15"/>
    <property type="match status" value="1"/>
</dbReference>
<dbReference type="Gene3D" id="6.10.250.3130">
    <property type="match status" value="1"/>
</dbReference>
<dbReference type="Gene3D" id="1.10.287.10">
    <property type="entry name" value="S15/NS1, RNA-binding"/>
    <property type="match status" value="1"/>
</dbReference>
<dbReference type="HAMAP" id="MF_01343_B">
    <property type="entry name" value="Ribosomal_uS15_B"/>
    <property type="match status" value="1"/>
</dbReference>
<dbReference type="InterPro" id="IPR000589">
    <property type="entry name" value="Ribosomal_uS15"/>
</dbReference>
<dbReference type="InterPro" id="IPR005290">
    <property type="entry name" value="Ribosomal_uS15_bac-type"/>
</dbReference>
<dbReference type="InterPro" id="IPR009068">
    <property type="entry name" value="uS15_NS1_RNA-bd_sf"/>
</dbReference>
<dbReference type="NCBIfam" id="TIGR00952">
    <property type="entry name" value="S15_bact"/>
    <property type="match status" value="1"/>
</dbReference>
<dbReference type="PANTHER" id="PTHR23321">
    <property type="entry name" value="RIBOSOMAL PROTEIN S15, BACTERIAL AND ORGANELLAR"/>
    <property type="match status" value="1"/>
</dbReference>
<dbReference type="PANTHER" id="PTHR23321:SF26">
    <property type="entry name" value="SMALL RIBOSOMAL SUBUNIT PROTEIN US15M"/>
    <property type="match status" value="1"/>
</dbReference>
<dbReference type="Pfam" id="PF00312">
    <property type="entry name" value="Ribosomal_S15"/>
    <property type="match status" value="1"/>
</dbReference>
<dbReference type="SMART" id="SM01387">
    <property type="entry name" value="Ribosomal_S15"/>
    <property type="match status" value="1"/>
</dbReference>
<dbReference type="SUPFAM" id="SSF47060">
    <property type="entry name" value="S15/NS1 RNA-binding domain"/>
    <property type="match status" value="1"/>
</dbReference>
<dbReference type="PROSITE" id="PS00362">
    <property type="entry name" value="RIBOSOMAL_S15"/>
    <property type="match status" value="1"/>
</dbReference>
<protein>
    <recommendedName>
        <fullName evidence="1">Small ribosomal subunit protein uS15</fullName>
    </recommendedName>
    <alternativeName>
        <fullName evidence="2">30S ribosomal protein S15</fullName>
    </alternativeName>
</protein>
<proteinExistence type="inferred from homology"/>